<evidence type="ECO:0000255" key="1">
    <source>
        <dbReference type="HAMAP-Rule" id="MF_01018"/>
    </source>
</evidence>
<reference key="1">
    <citation type="journal article" date="2005" name="BMC Genomics">
        <title>Bacterial genome adaptation to niches: divergence of the potential virulence genes in three Burkholderia species of different survival strategies.</title>
        <authorList>
            <person name="Kim H.S."/>
            <person name="Schell M.A."/>
            <person name="Yu Y."/>
            <person name="Ulrich R.L."/>
            <person name="Sarria S.H."/>
            <person name="Nierman W.C."/>
            <person name="DeShazer D."/>
        </authorList>
    </citation>
    <scope>NUCLEOTIDE SEQUENCE [LARGE SCALE GENOMIC DNA]</scope>
    <source>
        <strain>ATCC 700388 / DSM 13276 / CCUG 48851 / CIP 106301 / E264</strain>
    </source>
</reference>
<name>HIS1_BURTA</name>
<dbReference type="EC" id="2.4.2.17" evidence="1"/>
<dbReference type="EMBL" id="CP000086">
    <property type="protein sequence ID" value="ABC37769.1"/>
    <property type="molecule type" value="Genomic_DNA"/>
</dbReference>
<dbReference type="RefSeq" id="WP_009888527.1">
    <property type="nucleotide sequence ID" value="NZ_CP008786.1"/>
</dbReference>
<dbReference type="SMR" id="Q2SUA1"/>
<dbReference type="GeneID" id="45122682"/>
<dbReference type="KEGG" id="bte:BTH_I2994"/>
<dbReference type="HOGENOM" id="CLU_038115_2_0_4"/>
<dbReference type="UniPathway" id="UPA00031">
    <property type="reaction ID" value="UER00006"/>
</dbReference>
<dbReference type="Proteomes" id="UP000001930">
    <property type="component" value="Chromosome I"/>
</dbReference>
<dbReference type="GO" id="GO:0005737">
    <property type="term" value="C:cytoplasm"/>
    <property type="evidence" value="ECO:0007669"/>
    <property type="project" value="UniProtKB-SubCell"/>
</dbReference>
<dbReference type="GO" id="GO:0005524">
    <property type="term" value="F:ATP binding"/>
    <property type="evidence" value="ECO:0007669"/>
    <property type="project" value="UniProtKB-KW"/>
</dbReference>
<dbReference type="GO" id="GO:0003879">
    <property type="term" value="F:ATP phosphoribosyltransferase activity"/>
    <property type="evidence" value="ECO:0007669"/>
    <property type="project" value="UniProtKB-UniRule"/>
</dbReference>
<dbReference type="GO" id="GO:0000105">
    <property type="term" value="P:L-histidine biosynthetic process"/>
    <property type="evidence" value="ECO:0007669"/>
    <property type="project" value="UniProtKB-UniRule"/>
</dbReference>
<dbReference type="CDD" id="cd13595">
    <property type="entry name" value="PBP2_HisGs"/>
    <property type="match status" value="1"/>
</dbReference>
<dbReference type="FunFam" id="3.40.190.10:FF:000011">
    <property type="entry name" value="ATP phosphoribosyltransferase"/>
    <property type="match status" value="1"/>
</dbReference>
<dbReference type="Gene3D" id="3.40.190.10">
    <property type="entry name" value="Periplasmic binding protein-like II"/>
    <property type="match status" value="2"/>
</dbReference>
<dbReference type="HAMAP" id="MF_01018">
    <property type="entry name" value="HisG_Short"/>
    <property type="match status" value="1"/>
</dbReference>
<dbReference type="InterPro" id="IPR013820">
    <property type="entry name" value="ATP_PRibTrfase_cat"/>
</dbReference>
<dbReference type="InterPro" id="IPR018198">
    <property type="entry name" value="ATP_PRibTrfase_CS"/>
</dbReference>
<dbReference type="InterPro" id="IPR001348">
    <property type="entry name" value="ATP_PRibTrfase_HisG"/>
</dbReference>
<dbReference type="InterPro" id="IPR024893">
    <property type="entry name" value="ATP_PRibTrfase_HisG_short"/>
</dbReference>
<dbReference type="NCBIfam" id="TIGR00070">
    <property type="entry name" value="hisG"/>
    <property type="match status" value="1"/>
</dbReference>
<dbReference type="PANTHER" id="PTHR21403:SF8">
    <property type="entry name" value="ATP PHOSPHORIBOSYLTRANSFERASE"/>
    <property type="match status" value="1"/>
</dbReference>
<dbReference type="PANTHER" id="PTHR21403">
    <property type="entry name" value="ATP PHOSPHORIBOSYLTRANSFERASE ATP-PRTASE"/>
    <property type="match status" value="1"/>
</dbReference>
<dbReference type="Pfam" id="PF01634">
    <property type="entry name" value="HisG"/>
    <property type="match status" value="1"/>
</dbReference>
<dbReference type="SUPFAM" id="SSF53850">
    <property type="entry name" value="Periplasmic binding protein-like II"/>
    <property type="match status" value="1"/>
</dbReference>
<dbReference type="PROSITE" id="PS01316">
    <property type="entry name" value="ATP_P_PHORIBOSYLTR"/>
    <property type="match status" value="1"/>
</dbReference>
<proteinExistence type="inferred from homology"/>
<accession>Q2SUA1</accession>
<protein>
    <recommendedName>
        <fullName evidence="1">ATP phosphoribosyltransferase</fullName>
        <shortName evidence="1">ATP-PRT</shortName>
        <shortName evidence="1">ATP-PRTase</shortName>
        <ecNumber evidence="1">2.4.2.17</ecNumber>
    </recommendedName>
</protein>
<organism>
    <name type="scientific">Burkholderia thailandensis (strain ATCC 700388 / DSM 13276 / CCUG 48851 / CIP 106301 / E264)</name>
    <dbReference type="NCBI Taxonomy" id="271848"/>
    <lineage>
        <taxon>Bacteria</taxon>
        <taxon>Pseudomonadati</taxon>
        <taxon>Pseudomonadota</taxon>
        <taxon>Betaproteobacteria</taxon>
        <taxon>Burkholderiales</taxon>
        <taxon>Burkholderiaceae</taxon>
        <taxon>Burkholderia</taxon>
        <taxon>pseudomallei group</taxon>
    </lineage>
</organism>
<keyword id="KW-0028">Amino-acid biosynthesis</keyword>
<keyword id="KW-0067">ATP-binding</keyword>
<keyword id="KW-0963">Cytoplasm</keyword>
<keyword id="KW-0328">Glycosyltransferase</keyword>
<keyword id="KW-0368">Histidine biosynthesis</keyword>
<keyword id="KW-0547">Nucleotide-binding</keyword>
<keyword id="KW-0808">Transferase</keyword>
<sequence>MTAPLTLALSKGRIFEETVPLLAAAGVTVAEDPERSRKLILPTTDPNLRVIVVRATDVPTYVEYGAADFGVAGKDVLLEHGGGGLYQPIDLNIARCRMSVAVPAGFDYANAVRQGARLRVATKYVETAREHFAAKGVHVDLIKLYGSMELAPLVGLADAIVDLVSSGGTLKANNLVEVEEIMPISSRLVVNQAALKLKRAALKPFLDAFERASQGGGA</sequence>
<feature type="chain" id="PRO_1000063275" description="ATP phosphoribosyltransferase">
    <location>
        <begin position="1"/>
        <end position="218"/>
    </location>
</feature>
<comment type="function">
    <text evidence="1">Catalyzes the condensation of ATP and 5-phosphoribose 1-diphosphate to form N'-(5'-phosphoribosyl)-ATP (PR-ATP). Has a crucial role in the pathway because the rate of histidine biosynthesis seems to be controlled primarily by regulation of HisG enzymatic activity.</text>
</comment>
<comment type="catalytic activity">
    <reaction evidence="1">
        <text>1-(5-phospho-beta-D-ribosyl)-ATP + diphosphate = 5-phospho-alpha-D-ribose 1-diphosphate + ATP</text>
        <dbReference type="Rhea" id="RHEA:18473"/>
        <dbReference type="ChEBI" id="CHEBI:30616"/>
        <dbReference type="ChEBI" id="CHEBI:33019"/>
        <dbReference type="ChEBI" id="CHEBI:58017"/>
        <dbReference type="ChEBI" id="CHEBI:73183"/>
        <dbReference type="EC" id="2.4.2.17"/>
    </reaction>
</comment>
<comment type="pathway">
    <text evidence="1">Amino-acid biosynthesis; L-histidine biosynthesis; L-histidine from 5-phospho-alpha-D-ribose 1-diphosphate: step 1/9.</text>
</comment>
<comment type="subunit">
    <text evidence="1">Heteromultimer composed of HisG and HisZ subunits.</text>
</comment>
<comment type="subcellular location">
    <subcellularLocation>
        <location evidence="1">Cytoplasm</location>
    </subcellularLocation>
</comment>
<comment type="domain">
    <text>Lacks the C-terminal regulatory region which is replaced by HisZ.</text>
</comment>
<comment type="similarity">
    <text evidence="1">Belongs to the ATP phosphoribosyltransferase family. Short subfamily.</text>
</comment>
<gene>
    <name evidence="1" type="primary">hisG</name>
    <name type="ordered locus">BTH_I2994</name>
</gene>